<organism>
    <name type="scientific">Rhizobium johnstonii (strain DSM 114642 / LMG 32736 / 3841)</name>
    <name type="common">Rhizobium leguminosarum bv. viciae</name>
    <dbReference type="NCBI Taxonomy" id="216596"/>
    <lineage>
        <taxon>Bacteria</taxon>
        <taxon>Pseudomonadati</taxon>
        <taxon>Pseudomonadota</taxon>
        <taxon>Alphaproteobacteria</taxon>
        <taxon>Hyphomicrobiales</taxon>
        <taxon>Rhizobiaceae</taxon>
        <taxon>Rhizobium/Agrobacterium group</taxon>
        <taxon>Rhizobium</taxon>
        <taxon>Rhizobium johnstonii</taxon>
    </lineage>
</organism>
<proteinExistence type="inferred from homology"/>
<dbReference type="EC" id="1.1.1.103" evidence="1"/>
<dbReference type="EMBL" id="AM236080">
    <property type="protein sequence ID" value="CAK08892.1"/>
    <property type="molecule type" value="Genomic_DNA"/>
</dbReference>
<dbReference type="RefSeq" id="WP_011652887.1">
    <property type="nucleotide sequence ID" value="NC_008380.1"/>
</dbReference>
<dbReference type="SMR" id="Q1MDT5"/>
<dbReference type="EnsemblBacteria" id="CAK08892">
    <property type="protein sequence ID" value="CAK08892"/>
    <property type="gene ID" value="RL3404"/>
</dbReference>
<dbReference type="KEGG" id="rle:RL3404"/>
<dbReference type="eggNOG" id="COG1063">
    <property type="taxonomic scope" value="Bacteria"/>
</dbReference>
<dbReference type="HOGENOM" id="CLU_026673_11_0_5"/>
<dbReference type="UniPathway" id="UPA00046">
    <property type="reaction ID" value="UER00505"/>
</dbReference>
<dbReference type="Proteomes" id="UP000006575">
    <property type="component" value="Chromosome"/>
</dbReference>
<dbReference type="GO" id="GO:0005737">
    <property type="term" value="C:cytoplasm"/>
    <property type="evidence" value="ECO:0007669"/>
    <property type="project" value="UniProtKB-SubCell"/>
</dbReference>
<dbReference type="GO" id="GO:0008743">
    <property type="term" value="F:L-threonine 3-dehydrogenase activity"/>
    <property type="evidence" value="ECO:0007669"/>
    <property type="project" value="UniProtKB-UniRule"/>
</dbReference>
<dbReference type="GO" id="GO:0008270">
    <property type="term" value="F:zinc ion binding"/>
    <property type="evidence" value="ECO:0007669"/>
    <property type="project" value="UniProtKB-UniRule"/>
</dbReference>
<dbReference type="GO" id="GO:0019518">
    <property type="term" value="P:L-threonine catabolic process to glycine"/>
    <property type="evidence" value="ECO:0007669"/>
    <property type="project" value="UniProtKB-UniPathway"/>
</dbReference>
<dbReference type="Gene3D" id="3.90.180.10">
    <property type="entry name" value="Medium-chain alcohol dehydrogenases, catalytic domain"/>
    <property type="match status" value="1"/>
</dbReference>
<dbReference type="Gene3D" id="3.40.50.720">
    <property type="entry name" value="NAD(P)-binding Rossmann-like Domain"/>
    <property type="match status" value="1"/>
</dbReference>
<dbReference type="HAMAP" id="MF_00627">
    <property type="entry name" value="Thr_dehydrog"/>
    <property type="match status" value="1"/>
</dbReference>
<dbReference type="InterPro" id="IPR013149">
    <property type="entry name" value="ADH-like_C"/>
</dbReference>
<dbReference type="InterPro" id="IPR013154">
    <property type="entry name" value="ADH-like_N"/>
</dbReference>
<dbReference type="InterPro" id="IPR002328">
    <property type="entry name" value="ADH_Zn_CS"/>
</dbReference>
<dbReference type="InterPro" id="IPR011032">
    <property type="entry name" value="GroES-like_sf"/>
</dbReference>
<dbReference type="InterPro" id="IPR004627">
    <property type="entry name" value="L-Threonine_3-DHase"/>
</dbReference>
<dbReference type="InterPro" id="IPR036291">
    <property type="entry name" value="NAD(P)-bd_dom_sf"/>
</dbReference>
<dbReference type="InterPro" id="IPR020843">
    <property type="entry name" value="PKS_ER"/>
</dbReference>
<dbReference type="InterPro" id="IPR050129">
    <property type="entry name" value="Zn_alcohol_dh"/>
</dbReference>
<dbReference type="NCBIfam" id="NF003808">
    <property type="entry name" value="PRK05396.1"/>
    <property type="match status" value="1"/>
</dbReference>
<dbReference type="NCBIfam" id="TIGR00692">
    <property type="entry name" value="tdh"/>
    <property type="match status" value="1"/>
</dbReference>
<dbReference type="PANTHER" id="PTHR43401">
    <property type="entry name" value="L-THREONINE 3-DEHYDROGENASE"/>
    <property type="match status" value="1"/>
</dbReference>
<dbReference type="PANTHER" id="PTHR43401:SF2">
    <property type="entry name" value="L-THREONINE 3-DEHYDROGENASE"/>
    <property type="match status" value="1"/>
</dbReference>
<dbReference type="Pfam" id="PF08240">
    <property type="entry name" value="ADH_N"/>
    <property type="match status" value="1"/>
</dbReference>
<dbReference type="Pfam" id="PF00107">
    <property type="entry name" value="ADH_zinc_N"/>
    <property type="match status" value="1"/>
</dbReference>
<dbReference type="SMART" id="SM00829">
    <property type="entry name" value="PKS_ER"/>
    <property type="match status" value="1"/>
</dbReference>
<dbReference type="SUPFAM" id="SSF50129">
    <property type="entry name" value="GroES-like"/>
    <property type="match status" value="1"/>
</dbReference>
<dbReference type="SUPFAM" id="SSF51735">
    <property type="entry name" value="NAD(P)-binding Rossmann-fold domains"/>
    <property type="match status" value="1"/>
</dbReference>
<dbReference type="PROSITE" id="PS00059">
    <property type="entry name" value="ADH_ZINC"/>
    <property type="match status" value="1"/>
</dbReference>
<comment type="function">
    <text evidence="1">Catalyzes the NAD(+)-dependent oxidation of L-threonine to 2-amino-3-ketobutyrate.</text>
</comment>
<comment type="catalytic activity">
    <reaction evidence="1">
        <text>L-threonine + NAD(+) = (2S)-2-amino-3-oxobutanoate + NADH + H(+)</text>
        <dbReference type="Rhea" id="RHEA:13161"/>
        <dbReference type="ChEBI" id="CHEBI:15378"/>
        <dbReference type="ChEBI" id="CHEBI:57540"/>
        <dbReference type="ChEBI" id="CHEBI:57926"/>
        <dbReference type="ChEBI" id="CHEBI:57945"/>
        <dbReference type="ChEBI" id="CHEBI:78948"/>
        <dbReference type="EC" id="1.1.1.103"/>
    </reaction>
</comment>
<comment type="cofactor">
    <cofactor evidence="1">
        <name>Zn(2+)</name>
        <dbReference type="ChEBI" id="CHEBI:29105"/>
    </cofactor>
    <text evidence="1">Binds 2 Zn(2+) ions per subunit.</text>
</comment>
<comment type="pathway">
    <text evidence="1">Amino-acid degradation; L-threonine degradation via oxydo-reductase pathway; glycine from L-threonine: step 1/2.</text>
</comment>
<comment type="subunit">
    <text evidence="1">Homotetramer.</text>
</comment>
<comment type="subcellular location">
    <subcellularLocation>
        <location evidence="1">Cytoplasm</location>
    </subcellularLocation>
</comment>
<comment type="similarity">
    <text evidence="1">Belongs to the zinc-containing alcohol dehydrogenase family.</text>
</comment>
<gene>
    <name evidence="1" type="primary">tdh</name>
    <name type="ordered locus">RL3404</name>
</gene>
<protein>
    <recommendedName>
        <fullName evidence="1">L-threonine 3-dehydrogenase</fullName>
        <shortName evidence="1">TDH</shortName>
        <ecNumber evidence="1">1.1.1.103</ecNumber>
    </recommendedName>
</protein>
<reference key="1">
    <citation type="journal article" date="2006" name="Genome Biol.">
        <title>The genome of Rhizobium leguminosarum has recognizable core and accessory components.</title>
        <authorList>
            <person name="Young J.P.W."/>
            <person name="Crossman L.C."/>
            <person name="Johnston A.W.B."/>
            <person name="Thomson N.R."/>
            <person name="Ghazoui Z.F."/>
            <person name="Hull K.H."/>
            <person name="Wexler M."/>
            <person name="Curson A.R.J."/>
            <person name="Todd J.D."/>
            <person name="Poole P.S."/>
            <person name="Mauchline T.H."/>
            <person name="East A.K."/>
            <person name="Quail M.A."/>
            <person name="Churcher C."/>
            <person name="Arrowsmith C."/>
            <person name="Cherevach I."/>
            <person name="Chillingworth T."/>
            <person name="Clarke K."/>
            <person name="Cronin A."/>
            <person name="Davis P."/>
            <person name="Fraser A."/>
            <person name="Hance Z."/>
            <person name="Hauser H."/>
            <person name="Jagels K."/>
            <person name="Moule S."/>
            <person name="Mungall K."/>
            <person name="Norbertczak H."/>
            <person name="Rabbinowitsch E."/>
            <person name="Sanders M."/>
            <person name="Simmonds M."/>
            <person name="Whitehead S."/>
            <person name="Parkhill J."/>
        </authorList>
    </citation>
    <scope>NUCLEOTIDE SEQUENCE [LARGE SCALE GENOMIC DNA]</scope>
    <source>
        <strain>DSM 114642 / LMG 32736 / 3841</strain>
    </source>
</reference>
<name>TDH_RHIJ3</name>
<accession>Q1MDT5</accession>
<feature type="chain" id="PRO_1000051649" description="L-threonine 3-dehydrogenase">
    <location>
        <begin position="1"/>
        <end position="345"/>
    </location>
</feature>
<feature type="active site" description="Charge relay system" evidence="1">
    <location>
        <position position="44"/>
    </location>
</feature>
<feature type="active site" description="Charge relay system" evidence="1">
    <location>
        <position position="47"/>
    </location>
</feature>
<feature type="binding site" evidence="1">
    <location>
        <position position="42"/>
    </location>
    <ligand>
        <name>Zn(2+)</name>
        <dbReference type="ChEBI" id="CHEBI:29105"/>
        <label>1</label>
        <note>catalytic</note>
    </ligand>
</feature>
<feature type="binding site" evidence="1">
    <location>
        <position position="67"/>
    </location>
    <ligand>
        <name>Zn(2+)</name>
        <dbReference type="ChEBI" id="CHEBI:29105"/>
        <label>1</label>
        <note>catalytic</note>
    </ligand>
</feature>
<feature type="binding site" evidence="1">
    <location>
        <position position="68"/>
    </location>
    <ligand>
        <name>Zn(2+)</name>
        <dbReference type="ChEBI" id="CHEBI:29105"/>
        <label>1</label>
        <note>catalytic</note>
    </ligand>
</feature>
<feature type="binding site" evidence="1">
    <location>
        <position position="97"/>
    </location>
    <ligand>
        <name>Zn(2+)</name>
        <dbReference type="ChEBI" id="CHEBI:29105"/>
        <label>2</label>
    </ligand>
</feature>
<feature type="binding site" evidence="1">
    <location>
        <position position="100"/>
    </location>
    <ligand>
        <name>Zn(2+)</name>
        <dbReference type="ChEBI" id="CHEBI:29105"/>
        <label>2</label>
    </ligand>
</feature>
<feature type="binding site" evidence="1">
    <location>
        <position position="103"/>
    </location>
    <ligand>
        <name>Zn(2+)</name>
        <dbReference type="ChEBI" id="CHEBI:29105"/>
        <label>2</label>
    </ligand>
</feature>
<feature type="binding site" evidence="1">
    <location>
        <position position="111"/>
    </location>
    <ligand>
        <name>Zn(2+)</name>
        <dbReference type="ChEBI" id="CHEBI:29105"/>
        <label>2</label>
    </ligand>
</feature>
<feature type="binding site" evidence="1">
    <location>
        <position position="179"/>
    </location>
    <ligand>
        <name>NAD(+)</name>
        <dbReference type="ChEBI" id="CHEBI:57540"/>
    </ligand>
</feature>
<feature type="binding site" evidence="1">
    <location>
        <position position="199"/>
    </location>
    <ligand>
        <name>NAD(+)</name>
        <dbReference type="ChEBI" id="CHEBI:57540"/>
    </ligand>
</feature>
<feature type="binding site" evidence="1">
    <location>
        <position position="204"/>
    </location>
    <ligand>
        <name>NAD(+)</name>
        <dbReference type="ChEBI" id="CHEBI:57540"/>
    </ligand>
</feature>
<feature type="binding site" evidence="1">
    <location>
        <begin position="266"/>
        <end position="268"/>
    </location>
    <ligand>
        <name>NAD(+)</name>
        <dbReference type="ChEBI" id="CHEBI:57540"/>
    </ligand>
</feature>
<feature type="binding site" evidence="1">
    <location>
        <begin position="290"/>
        <end position="291"/>
    </location>
    <ligand>
        <name>NAD(+)</name>
        <dbReference type="ChEBI" id="CHEBI:57540"/>
    </ligand>
</feature>
<feature type="site" description="Important for catalytic activity for the proton relay mechanism but does not participate directly in the coordination of zinc atom" evidence="1">
    <location>
        <position position="152"/>
    </location>
</feature>
<evidence type="ECO:0000255" key="1">
    <source>
        <dbReference type="HAMAP-Rule" id="MF_00627"/>
    </source>
</evidence>
<keyword id="KW-0963">Cytoplasm</keyword>
<keyword id="KW-0479">Metal-binding</keyword>
<keyword id="KW-0520">NAD</keyword>
<keyword id="KW-0560">Oxidoreductase</keyword>
<keyword id="KW-0862">Zinc</keyword>
<sequence length="345" mass="37440">MSNMMKALVKAKPEVGLWMENVPVPEVGPNDVLIRVKKSAICGTDVHIWNWDQWAQKTIPVPMVVGHEFSGEIAEIGSAVTRYHVGERVSGEGHIVCGKCRNCRAGRGHLCRNTLGVGVNRPGSFGEFVCIPESNVVPIPDDISDEIAAIFDPFGNAVHTALSFDLVGEDVLVTGAGPIGIMGALVAKRSGARKVVITDINPHRLELARKLGIDHVVDASKENLADVMKAIGMTEGFDVGLEMSGAAPAFRDMIDKMNNGGKIAILGIAPAGFEIDWNKVIFKMLNLKGIYGREMFETWYKMIAFVQGGLDLAPIITHRIGIDDFRDGFEAMRSGNSGKVVMDWM</sequence>